<feature type="chain" id="PRO_1000085601" description="Acyl carrier protein">
    <location>
        <begin position="1"/>
        <end position="78"/>
    </location>
</feature>
<feature type="domain" description="Carrier" evidence="2">
    <location>
        <begin position="2"/>
        <end position="77"/>
    </location>
</feature>
<feature type="modified residue" description="O-(pantetheine 4'-phosphoryl)serine" evidence="2">
    <location>
        <position position="37"/>
    </location>
</feature>
<sequence>MSDIASRVKAIIVDKLGVDENEVVTEASFTNDLGADSLDTVELIMEFEKEFDIQIPDDQAENIATVGQAISYIEEAKK</sequence>
<gene>
    <name evidence="1" type="primary">acpP</name>
    <name type="ordered locus">Fjoh_1137</name>
</gene>
<dbReference type="EMBL" id="CP000685">
    <property type="protein sequence ID" value="ABQ04170.1"/>
    <property type="molecule type" value="Genomic_DNA"/>
</dbReference>
<dbReference type="RefSeq" id="WP_007137004.1">
    <property type="nucleotide sequence ID" value="NZ_MUGZ01000003.1"/>
</dbReference>
<dbReference type="SMR" id="A5FKU7"/>
<dbReference type="STRING" id="376686.Fjoh_1137"/>
<dbReference type="KEGG" id="fjo:Fjoh_1137"/>
<dbReference type="eggNOG" id="COG0236">
    <property type="taxonomic scope" value="Bacteria"/>
</dbReference>
<dbReference type="HOGENOM" id="CLU_108696_5_1_10"/>
<dbReference type="OrthoDB" id="9804551at2"/>
<dbReference type="UniPathway" id="UPA00094"/>
<dbReference type="Proteomes" id="UP000006694">
    <property type="component" value="Chromosome"/>
</dbReference>
<dbReference type="GO" id="GO:0005829">
    <property type="term" value="C:cytosol"/>
    <property type="evidence" value="ECO:0007669"/>
    <property type="project" value="TreeGrafter"/>
</dbReference>
<dbReference type="GO" id="GO:0016020">
    <property type="term" value="C:membrane"/>
    <property type="evidence" value="ECO:0007669"/>
    <property type="project" value="GOC"/>
</dbReference>
<dbReference type="GO" id="GO:0000035">
    <property type="term" value="F:acyl binding"/>
    <property type="evidence" value="ECO:0007669"/>
    <property type="project" value="TreeGrafter"/>
</dbReference>
<dbReference type="GO" id="GO:0000036">
    <property type="term" value="F:acyl carrier activity"/>
    <property type="evidence" value="ECO:0007669"/>
    <property type="project" value="UniProtKB-UniRule"/>
</dbReference>
<dbReference type="GO" id="GO:0009245">
    <property type="term" value="P:lipid A biosynthetic process"/>
    <property type="evidence" value="ECO:0007669"/>
    <property type="project" value="TreeGrafter"/>
</dbReference>
<dbReference type="FunFam" id="1.10.1200.10:FF:000001">
    <property type="entry name" value="Acyl carrier protein"/>
    <property type="match status" value="1"/>
</dbReference>
<dbReference type="Gene3D" id="1.10.1200.10">
    <property type="entry name" value="ACP-like"/>
    <property type="match status" value="1"/>
</dbReference>
<dbReference type="HAMAP" id="MF_01217">
    <property type="entry name" value="Acyl_carrier"/>
    <property type="match status" value="1"/>
</dbReference>
<dbReference type="InterPro" id="IPR003231">
    <property type="entry name" value="ACP"/>
</dbReference>
<dbReference type="InterPro" id="IPR036736">
    <property type="entry name" value="ACP-like_sf"/>
</dbReference>
<dbReference type="InterPro" id="IPR009081">
    <property type="entry name" value="PP-bd_ACP"/>
</dbReference>
<dbReference type="InterPro" id="IPR006162">
    <property type="entry name" value="Ppantetheine_attach_site"/>
</dbReference>
<dbReference type="NCBIfam" id="TIGR00517">
    <property type="entry name" value="acyl_carrier"/>
    <property type="match status" value="1"/>
</dbReference>
<dbReference type="NCBIfam" id="NF002148">
    <property type="entry name" value="PRK00982.1-2"/>
    <property type="match status" value="1"/>
</dbReference>
<dbReference type="NCBIfam" id="NF002149">
    <property type="entry name" value="PRK00982.1-3"/>
    <property type="match status" value="1"/>
</dbReference>
<dbReference type="NCBIfam" id="NF002150">
    <property type="entry name" value="PRK00982.1-4"/>
    <property type="match status" value="1"/>
</dbReference>
<dbReference type="NCBIfam" id="NF002151">
    <property type="entry name" value="PRK00982.1-5"/>
    <property type="match status" value="1"/>
</dbReference>
<dbReference type="PANTHER" id="PTHR20863">
    <property type="entry name" value="ACYL CARRIER PROTEIN"/>
    <property type="match status" value="1"/>
</dbReference>
<dbReference type="PANTHER" id="PTHR20863:SF76">
    <property type="entry name" value="CARRIER DOMAIN-CONTAINING PROTEIN"/>
    <property type="match status" value="1"/>
</dbReference>
<dbReference type="Pfam" id="PF00550">
    <property type="entry name" value="PP-binding"/>
    <property type="match status" value="1"/>
</dbReference>
<dbReference type="SUPFAM" id="SSF47336">
    <property type="entry name" value="ACP-like"/>
    <property type="match status" value="1"/>
</dbReference>
<dbReference type="PROSITE" id="PS50075">
    <property type="entry name" value="CARRIER"/>
    <property type="match status" value="1"/>
</dbReference>
<dbReference type="PROSITE" id="PS00012">
    <property type="entry name" value="PHOSPHOPANTETHEINE"/>
    <property type="match status" value="1"/>
</dbReference>
<name>ACP_FLAJ1</name>
<evidence type="ECO:0000255" key="1">
    <source>
        <dbReference type="HAMAP-Rule" id="MF_01217"/>
    </source>
</evidence>
<evidence type="ECO:0000255" key="2">
    <source>
        <dbReference type="PROSITE-ProRule" id="PRU00258"/>
    </source>
</evidence>
<reference key="1">
    <citation type="journal article" date="2009" name="Appl. Environ. Microbiol.">
        <title>Novel features of the polysaccharide-digesting gliding bacterium Flavobacterium johnsoniae as revealed by genome sequence analysis.</title>
        <authorList>
            <person name="McBride M.J."/>
            <person name="Xie G."/>
            <person name="Martens E.C."/>
            <person name="Lapidus A."/>
            <person name="Henrissat B."/>
            <person name="Rhodes R.G."/>
            <person name="Goltsman E."/>
            <person name="Wang W."/>
            <person name="Xu J."/>
            <person name="Hunnicutt D.W."/>
            <person name="Staroscik A.M."/>
            <person name="Hoover T.R."/>
            <person name="Cheng Y.Q."/>
            <person name="Stein J.L."/>
        </authorList>
    </citation>
    <scope>NUCLEOTIDE SEQUENCE [LARGE SCALE GENOMIC DNA]</scope>
    <source>
        <strain>ATCC 17061 / DSM 2064 / JCM 8514 / BCRC 14874 / CCUG 350202 / NBRC 14942 / NCIMB 11054 / UW101</strain>
    </source>
</reference>
<accession>A5FKU7</accession>
<organism>
    <name type="scientific">Flavobacterium johnsoniae (strain ATCC 17061 / DSM 2064 / JCM 8514 / BCRC 14874 / CCUG 350202 / NBRC 14942 / NCIMB 11054 / UW101)</name>
    <name type="common">Cytophaga johnsonae</name>
    <dbReference type="NCBI Taxonomy" id="376686"/>
    <lineage>
        <taxon>Bacteria</taxon>
        <taxon>Pseudomonadati</taxon>
        <taxon>Bacteroidota</taxon>
        <taxon>Flavobacteriia</taxon>
        <taxon>Flavobacteriales</taxon>
        <taxon>Flavobacteriaceae</taxon>
        <taxon>Flavobacterium</taxon>
    </lineage>
</organism>
<proteinExistence type="inferred from homology"/>
<protein>
    <recommendedName>
        <fullName evidence="1">Acyl carrier protein</fullName>
        <shortName evidence="1">ACP</shortName>
    </recommendedName>
</protein>
<comment type="function">
    <text evidence="1">Carrier of the growing fatty acid chain in fatty acid biosynthesis.</text>
</comment>
<comment type="pathway">
    <text evidence="1">Lipid metabolism; fatty acid biosynthesis.</text>
</comment>
<comment type="subcellular location">
    <subcellularLocation>
        <location evidence="1">Cytoplasm</location>
    </subcellularLocation>
</comment>
<comment type="PTM">
    <text evidence="1">4'-phosphopantetheine is transferred from CoA to a specific serine of apo-ACP by AcpS. This modification is essential for activity because fatty acids are bound in thioester linkage to the sulfhydryl of the prosthetic group.</text>
</comment>
<comment type="similarity">
    <text evidence="1">Belongs to the acyl carrier protein (ACP) family.</text>
</comment>
<keyword id="KW-0963">Cytoplasm</keyword>
<keyword id="KW-0275">Fatty acid biosynthesis</keyword>
<keyword id="KW-0276">Fatty acid metabolism</keyword>
<keyword id="KW-0444">Lipid biosynthesis</keyword>
<keyword id="KW-0443">Lipid metabolism</keyword>
<keyword id="KW-0596">Phosphopantetheine</keyword>
<keyword id="KW-0597">Phosphoprotein</keyword>